<name>SP5G_STAA2</name>
<evidence type="ECO:0000255" key="1">
    <source>
        <dbReference type="HAMAP-Rule" id="MF_00819"/>
    </source>
</evidence>
<organism>
    <name type="scientific">Staphylococcus aureus (strain JH1)</name>
    <dbReference type="NCBI Taxonomy" id="359787"/>
    <lineage>
        <taxon>Bacteria</taxon>
        <taxon>Bacillati</taxon>
        <taxon>Bacillota</taxon>
        <taxon>Bacilli</taxon>
        <taxon>Bacillales</taxon>
        <taxon>Staphylococcaceae</taxon>
        <taxon>Staphylococcus</taxon>
    </lineage>
</organism>
<proteinExistence type="inferred from homology"/>
<protein>
    <recommendedName>
        <fullName evidence="1">Putative septation protein SpoVG</fullName>
    </recommendedName>
</protein>
<keyword id="KW-0131">Cell cycle</keyword>
<keyword id="KW-0132">Cell division</keyword>
<keyword id="KW-0717">Septation</keyword>
<feature type="chain" id="PRO_1000083848" description="Putative septation protein SpoVG">
    <location>
        <begin position="1"/>
        <end position="100"/>
    </location>
</feature>
<dbReference type="EMBL" id="CP000736">
    <property type="protein sequence ID" value="ABR51390.1"/>
    <property type="molecule type" value="Genomic_DNA"/>
</dbReference>
<dbReference type="SMR" id="A6TYX2"/>
<dbReference type="KEGG" id="sah:SaurJH1_0532"/>
<dbReference type="HOGENOM" id="CLU_103669_2_1_9"/>
<dbReference type="GO" id="GO:0000917">
    <property type="term" value="P:division septum assembly"/>
    <property type="evidence" value="ECO:0007669"/>
    <property type="project" value="UniProtKB-KW"/>
</dbReference>
<dbReference type="GO" id="GO:0030435">
    <property type="term" value="P:sporulation resulting in formation of a cellular spore"/>
    <property type="evidence" value="ECO:0007669"/>
    <property type="project" value="InterPro"/>
</dbReference>
<dbReference type="Gene3D" id="3.30.1120.40">
    <property type="entry name" value="Stage V sporulation protein G"/>
    <property type="match status" value="1"/>
</dbReference>
<dbReference type="HAMAP" id="MF_00819">
    <property type="entry name" value="SpoVG"/>
    <property type="match status" value="1"/>
</dbReference>
<dbReference type="InterPro" id="IPR007170">
    <property type="entry name" value="SpoVG"/>
</dbReference>
<dbReference type="InterPro" id="IPR036751">
    <property type="entry name" value="SpoVG_sf"/>
</dbReference>
<dbReference type="NCBIfam" id="NF009749">
    <property type="entry name" value="PRK13259.1"/>
    <property type="match status" value="1"/>
</dbReference>
<dbReference type="PANTHER" id="PTHR38429">
    <property type="entry name" value="SEPTATION PROTEIN SPOVG-RELATED"/>
    <property type="match status" value="1"/>
</dbReference>
<dbReference type="PANTHER" id="PTHR38429:SF1">
    <property type="entry name" value="SEPTATION PROTEIN SPOVG-RELATED"/>
    <property type="match status" value="1"/>
</dbReference>
<dbReference type="Pfam" id="PF04026">
    <property type="entry name" value="SpoVG"/>
    <property type="match status" value="1"/>
</dbReference>
<dbReference type="SUPFAM" id="SSF160537">
    <property type="entry name" value="SpoVG-like"/>
    <property type="match status" value="1"/>
</dbReference>
<accession>A6TYX2</accession>
<gene>
    <name evidence="1" type="primary">spoVG</name>
    <name type="ordered locus">SaurJH1_0532</name>
</gene>
<reference key="1">
    <citation type="submission" date="2007-06" db="EMBL/GenBank/DDBJ databases">
        <title>Complete sequence of chromosome of Staphylococcus aureus subsp. aureus JH1.</title>
        <authorList>
            <consortium name="US DOE Joint Genome Institute"/>
            <person name="Copeland A."/>
            <person name="Lucas S."/>
            <person name="Lapidus A."/>
            <person name="Barry K."/>
            <person name="Detter J.C."/>
            <person name="Glavina del Rio T."/>
            <person name="Hammon N."/>
            <person name="Israni S."/>
            <person name="Dalin E."/>
            <person name="Tice H."/>
            <person name="Pitluck S."/>
            <person name="Chain P."/>
            <person name="Malfatti S."/>
            <person name="Shin M."/>
            <person name="Vergez L."/>
            <person name="Schmutz J."/>
            <person name="Larimer F."/>
            <person name="Land M."/>
            <person name="Hauser L."/>
            <person name="Kyrpides N."/>
            <person name="Ivanova N."/>
            <person name="Tomasz A."/>
            <person name="Richardson P."/>
        </authorList>
    </citation>
    <scope>NUCLEOTIDE SEQUENCE [LARGE SCALE GENOMIC DNA]</scope>
    <source>
        <strain>JH1</strain>
    </source>
</reference>
<sequence length="100" mass="11278">MKVTDVRLRKIQTDGRMKALVSITLDEAFVIHDLRVIEGNSGLFVAMPSKRTPDGEFRDIAHPINSDMRQEIQDAVMKVYDETDEVVPDKNATSEDSEEA</sequence>
<comment type="function">
    <text evidence="1">Could be involved in septation.</text>
</comment>
<comment type="similarity">
    <text evidence="1">Belongs to the SpoVG family.</text>
</comment>